<dbReference type="EC" id="2.1.1.228" evidence="1"/>
<dbReference type="EMBL" id="CP000673">
    <property type="protein sequence ID" value="EDK33447.1"/>
    <property type="molecule type" value="Genomic_DNA"/>
</dbReference>
<dbReference type="RefSeq" id="WP_012101794.1">
    <property type="nucleotide sequence ID" value="NC_009706.1"/>
</dbReference>
<dbReference type="SMR" id="A5N816"/>
<dbReference type="STRING" id="431943.CKL_1405"/>
<dbReference type="KEGG" id="ckl:CKL_1405"/>
<dbReference type="eggNOG" id="COG0336">
    <property type="taxonomic scope" value="Bacteria"/>
</dbReference>
<dbReference type="HOGENOM" id="CLU_047363_0_1_9"/>
<dbReference type="Proteomes" id="UP000002411">
    <property type="component" value="Chromosome"/>
</dbReference>
<dbReference type="GO" id="GO:0005829">
    <property type="term" value="C:cytosol"/>
    <property type="evidence" value="ECO:0007669"/>
    <property type="project" value="TreeGrafter"/>
</dbReference>
<dbReference type="GO" id="GO:0052906">
    <property type="term" value="F:tRNA (guanine(37)-N1)-methyltransferase activity"/>
    <property type="evidence" value="ECO:0007669"/>
    <property type="project" value="UniProtKB-UniRule"/>
</dbReference>
<dbReference type="GO" id="GO:0002939">
    <property type="term" value="P:tRNA N1-guanine methylation"/>
    <property type="evidence" value="ECO:0007669"/>
    <property type="project" value="TreeGrafter"/>
</dbReference>
<dbReference type="CDD" id="cd18080">
    <property type="entry name" value="TrmD-like"/>
    <property type="match status" value="1"/>
</dbReference>
<dbReference type="FunFam" id="1.10.1270.20:FF:000001">
    <property type="entry name" value="tRNA (guanine-N(1)-)-methyltransferase"/>
    <property type="match status" value="1"/>
</dbReference>
<dbReference type="FunFam" id="3.40.1280.10:FF:000001">
    <property type="entry name" value="tRNA (guanine-N(1)-)-methyltransferase"/>
    <property type="match status" value="1"/>
</dbReference>
<dbReference type="Gene3D" id="3.40.1280.10">
    <property type="match status" value="1"/>
</dbReference>
<dbReference type="Gene3D" id="1.10.1270.20">
    <property type="entry name" value="tRNA(m1g37)methyltransferase, domain 2"/>
    <property type="match status" value="1"/>
</dbReference>
<dbReference type="HAMAP" id="MF_00605">
    <property type="entry name" value="TrmD"/>
    <property type="match status" value="1"/>
</dbReference>
<dbReference type="InterPro" id="IPR029028">
    <property type="entry name" value="Alpha/beta_knot_MTases"/>
</dbReference>
<dbReference type="InterPro" id="IPR023148">
    <property type="entry name" value="tRNA_m1G_MeTrfase_C_sf"/>
</dbReference>
<dbReference type="InterPro" id="IPR002649">
    <property type="entry name" value="tRNA_m1G_MeTrfase_TrmD"/>
</dbReference>
<dbReference type="InterPro" id="IPR029026">
    <property type="entry name" value="tRNA_m1G_MTases_N"/>
</dbReference>
<dbReference type="InterPro" id="IPR016009">
    <property type="entry name" value="tRNA_MeTrfase_TRMD/TRM10"/>
</dbReference>
<dbReference type="NCBIfam" id="NF000648">
    <property type="entry name" value="PRK00026.1"/>
    <property type="match status" value="1"/>
</dbReference>
<dbReference type="NCBIfam" id="TIGR00088">
    <property type="entry name" value="trmD"/>
    <property type="match status" value="1"/>
</dbReference>
<dbReference type="PANTHER" id="PTHR46417">
    <property type="entry name" value="TRNA (GUANINE-N(1)-)-METHYLTRANSFERASE"/>
    <property type="match status" value="1"/>
</dbReference>
<dbReference type="PANTHER" id="PTHR46417:SF1">
    <property type="entry name" value="TRNA (GUANINE-N(1)-)-METHYLTRANSFERASE"/>
    <property type="match status" value="1"/>
</dbReference>
<dbReference type="Pfam" id="PF01746">
    <property type="entry name" value="tRNA_m1G_MT"/>
    <property type="match status" value="1"/>
</dbReference>
<dbReference type="PIRSF" id="PIRSF000386">
    <property type="entry name" value="tRNA_mtase"/>
    <property type="match status" value="1"/>
</dbReference>
<dbReference type="SUPFAM" id="SSF75217">
    <property type="entry name" value="alpha/beta knot"/>
    <property type="match status" value="1"/>
</dbReference>
<feature type="chain" id="PRO_1000082512" description="tRNA (guanine-N(1)-)-methyltransferase">
    <location>
        <begin position="1"/>
        <end position="244"/>
    </location>
</feature>
<feature type="binding site" evidence="1">
    <location>
        <position position="112"/>
    </location>
    <ligand>
        <name>S-adenosyl-L-methionine</name>
        <dbReference type="ChEBI" id="CHEBI:59789"/>
    </ligand>
</feature>
<feature type="binding site" evidence="1">
    <location>
        <begin position="131"/>
        <end position="136"/>
    </location>
    <ligand>
        <name>S-adenosyl-L-methionine</name>
        <dbReference type="ChEBI" id="CHEBI:59789"/>
    </ligand>
</feature>
<keyword id="KW-0963">Cytoplasm</keyword>
<keyword id="KW-0489">Methyltransferase</keyword>
<keyword id="KW-1185">Reference proteome</keyword>
<keyword id="KW-0949">S-adenosyl-L-methionine</keyword>
<keyword id="KW-0808">Transferase</keyword>
<keyword id="KW-0819">tRNA processing</keyword>
<comment type="function">
    <text evidence="1">Specifically methylates guanosine-37 in various tRNAs.</text>
</comment>
<comment type="catalytic activity">
    <reaction evidence="1">
        <text>guanosine(37) in tRNA + S-adenosyl-L-methionine = N(1)-methylguanosine(37) in tRNA + S-adenosyl-L-homocysteine + H(+)</text>
        <dbReference type="Rhea" id="RHEA:36899"/>
        <dbReference type="Rhea" id="RHEA-COMP:10145"/>
        <dbReference type="Rhea" id="RHEA-COMP:10147"/>
        <dbReference type="ChEBI" id="CHEBI:15378"/>
        <dbReference type="ChEBI" id="CHEBI:57856"/>
        <dbReference type="ChEBI" id="CHEBI:59789"/>
        <dbReference type="ChEBI" id="CHEBI:73542"/>
        <dbReference type="ChEBI" id="CHEBI:74269"/>
        <dbReference type="EC" id="2.1.1.228"/>
    </reaction>
</comment>
<comment type="subunit">
    <text evidence="1">Homodimer.</text>
</comment>
<comment type="subcellular location">
    <subcellularLocation>
        <location evidence="1">Cytoplasm</location>
    </subcellularLocation>
</comment>
<comment type="similarity">
    <text evidence="1">Belongs to the RNA methyltransferase TrmD family.</text>
</comment>
<name>TRMD_CLOK5</name>
<accession>A5N816</accession>
<proteinExistence type="inferred from homology"/>
<organism>
    <name type="scientific">Clostridium kluyveri (strain ATCC 8527 / DSM 555 / NBRC 12016 / NCIMB 10680 / K1)</name>
    <dbReference type="NCBI Taxonomy" id="431943"/>
    <lineage>
        <taxon>Bacteria</taxon>
        <taxon>Bacillati</taxon>
        <taxon>Bacillota</taxon>
        <taxon>Clostridia</taxon>
        <taxon>Eubacteriales</taxon>
        <taxon>Clostridiaceae</taxon>
        <taxon>Clostridium</taxon>
    </lineage>
</organism>
<evidence type="ECO:0000255" key="1">
    <source>
        <dbReference type="HAMAP-Rule" id="MF_00605"/>
    </source>
</evidence>
<gene>
    <name evidence="1" type="primary">trmD</name>
    <name type="ordered locus">CKL_1405</name>
</gene>
<protein>
    <recommendedName>
        <fullName evidence="1">tRNA (guanine-N(1)-)-methyltransferase</fullName>
        <ecNumber evidence="1">2.1.1.228</ecNumber>
    </recommendedName>
    <alternativeName>
        <fullName evidence="1">M1G-methyltransferase</fullName>
    </alternativeName>
    <alternativeName>
        <fullName evidence="1">tRNA [GM37] methyltransferase</fullName>
    </alternativeName>
</protein>
<reference key="1">
    <citation type="journal article" date="2008" name="Proc. Natl. Acad. Sci. U.S.A.">
        <title>The genome of Clostridium kluyveri, a strict anaerobe with unique metabolic features.</title>
        <authorList>
            <person name="Seedorf H."/>
            <person name="Fricke W.F."/>
            <person name="Veith B."/>
            <person name="Brueggemann H."/>
            <person name="Liesegang H."/>
            <person name="Strittmatter A."/>
            <person name="Miethke M."/>
            <person name="Buckel W."/>
            <person name="Hinderberger J."/>
            <person name="Li F."/>
            <person name="Hagemeier C."/>
            <person name="Thauer R.K."/>
            <person name="Gottschalk G."/>
        </authorList>
    </citation>
    <scope>NUCLEOTIDE SEQUENCE [LARGE SCALE GENOMIC DNA]</scope>
    <source>
        <strain>ATCC 8527 / DSM 555 / NBRC 12016 / NCIMB 10680 / K1</strain>
    </source>
</reference>
<sequence length="244" mass="28236">MDVKIDILTLFPEMFHVFNYSIIGRAIEKNILSINTFNIRNFTENKHRKVDDYPYGGGSGMIMTAQPIVDCINSVKTQNKGNVVYLGPRGKIFDQSMAKKLSSEKELIFLCGHYEGIDERVYRYIDLEISIGDFIVTGGEMACIPIVDSICRMIPGVLSSTESYTEESFYNGVLEYPQYTRPEFFRGDRVPEVLISGHHENIRKWRRAKSFILTKNKRPDLFERIELSKEDRELIKLYENGYTD</sequence>